<name>DDRGK_DANRE</name>
<protein>
    <recommendedName>
        <fullName evidence="8">DDRGK domain-containing protein 1</fullName>
    </recommendedName>
</protein>
<gene>
    <name evidence="6" type="primary">ddrgk1</name>
    <name evidence="7" type="ORF">zgc:56488</name>
</gene>
<evidence type="ECO:0000250" key="1">
    <source>
        <dbReference type="UniProtKB" id="Q80WW9"/>
    </source>
</evidence>
<evidence type="ECO:0000250" key="2">
    <source>
        <dbReference type="UniProtKB" id="Q96HY6"/>
    </source>
</evidence>
<evidence type="ECO:0000255" key="3"/>
<evidence type="ECO:0000256" key="4">
    <source>
        <dbReference type="SAM" id="MobiDB-lite"/>
    </source>
</evidence>
<evidence type="ECO:0000269" key="5">
    <source>
    </source>
</evidence>
<evidence type="ECO:0000303" key="6">
    <source>
    </source>
</evidence>
<evidence type="ECO:0000303" key="7">
    <source ref="1"/>
</evidence>
<evidence type="ECO:0000305" key="8"/>
<proteinExistence type="evidence at transcript level"/>
<organism>
    <name type="scientific">Danio rerio</name>
    <name type="common">Zebrafish</name>
    <name type="synonym">Brachydanio rerio</name>
    <dbReference type="NCBI Taxonomy" id="7955"/>
    <lineage>
        <taxon>Eukaryota</taxon>
        <taxon>Metazoa</taxon>
        <taxon>Chordata</taxon>
        <taxon>Craniata</taxon>
        <taxon>Vertebrata</taxon>
        <taxon>Euteleostomi</taxon>
        <taxon>Actinopterygii</taxon>
        <taxon>Neopterygii</taxon>
        <taxon>Teleostei</taxon>
        <taxon>Ostariophysi</taxon>
        <taxon>Cypriniformes</taxon>
        <taxon>Danionidae</taxon>
        <taxon>Danioninae</taxon>
        <taxon>Danio</taxon>
    </lineage>
</organism>
<feature type="chain" id="PRO_0000391852" description="DDRGK domain-containing protein 1">
    <location>
        <begin position="1"/>
        <end position="300"/>
    </location>
</feature>
<feature type="topological domain" description="Lumenal" evidence="8">
    <location>
        <begin position="1"/>
        <end position="2"/>
    </location>
</feature>
<feature type="transmembrane region" description="Helical" evidence="3">
    <location>
        <begin position="3"/>
        <end position="23"/>
    </location>
</feature>
<feature type="topological domain" description="Cytoplasmic" evidence="8">
    <location>
        <begin position="24"/>
        <end position="300"/>
    </location>
</feature>
<feature type="domain" description="PCI">
    <location>
        <begin position="217"/>
        <end position="261"/>
    </location>
</feature>
<feature type="region of interest" description="Disordered" evidence="4">
    <location>
        <begin position="28"/>
        <end position="173"/>
    </location>
</feature>
<feature type="short sequence motif" description="UFM1-interacting motif (UFIM)" evidence="2">
    <location>
        <begin position="183"/>
        <end position="197"/>
    </location>
</feature>
<feature type="compositionally biased region" description="Acidic residues" evidence="4">
    <location>
        <begin position="78"/>
        <end position="90"/>
    </location>
</feature>
<feature type="compositionally biased region" description="Basic and acidic residues" evidence="4">
    <location>
        <begin position="112"/>
        <end position="173"/>
    </location>
</feature>
<reference key="1">
    <citation type="submission" date="2004-01" db="EMBL/GenBank/DDBJ databases">
        <authorList>
            <consortium name="NIH - Zebrafish Gene Collection (ZGC) project"/>
        </authorList>
    </citation>
    <scope>NUCLEOTIDE SEQUENCE [LARGE SCALE MRNA]</scope>
    <source>
        <tissue>Embryo</tissue>
    </source>
</reference>
<reference key="2">
    <citation type="journal article" date="2017" name="J. Clin. Invest.">
        <title>Loss of DDRGK1 modulates SOX9 ubiquitination in spondyloepimetaphyseal dysplasia.</title>
        <authorList>
            <person name="Egunsola A.T."/>
            <person name="Bae Y."/>
            <person name="Jiang M.M."/>
            <person name="Liu D.S."/>
            <person name="Chen-Evenson Y."/>
            <person name="Bertin T."/>
            <person name="Chen S."/>
            <person name="Lu J.T."/>
            <person name="Nevarez L."/>
            <person name="Magal N."/>
            <person name="Raas-Rothschild A."/>
            <person name="Swindell E.C."/>
            <person name="Cohn D.H."/>
            <person name="Gibbs R.A."/>
            <person name="Campeau P.M."/>
            <person name="Shohat M."/>
            <person name="Lee B.H."/>
        </authorList>
    </citation>
    <scope>FUNCTION</scope>
    <scope>DISRUPTION PHENOTYPE</scope>
</reference>
<dbReference type="EMBL" id="BC065652">
    <property type="protein sequence ID" value="AAH65652.1"/>
    <property type="molecule type" value="mRNA"/>
</dbReference>
<dbReference type="RefSeq" id="NP_956587.2">
    <property type="nucleotide sequence ID" value="NM_200293.2"/>
</dbReference>
<dbReference type="SMR" id="Q6P0E5"/>
<dbReference type="FunCoup" id="Q6P0E5">
    <property type="interactions" value="768"/>
</dbReference>
<dbReference type="STRING" id="7955.ENSDARP00000054056"/>
<dbReference type="PaxDb" id="7955-ENSDARP00000088891"/>
<dbReference type="GeneID" id="393263"/>
<dbReference type="KEGG" id="dre:393263"/>
<dbReference type="AGR" id="ZFIN:ZDB-GENE-040426-1050"/>
<dbReference type="CTD" id="65992"/>
<dbReference type="ZFIN" id="ZDB-GENE-040426-1050">
    <property type="gene designation" value="ddrgk1"/>
</dbReference>
<dbReference type="eggNOG" id="KOG3054">
    <property type="taxonomic scope" value="Eukaryota"/>
</dbReference>
<dbReference type="InParanoid" id="Q6P0E5"/>
<dbReference type="OrthoDB" id="2285710at2759"/>
<dbReference type="PhylomeDB" id="Q6P0E5"/>
<dbReference type="PRO" id="PR:Q6P0E5"/>
<dbReference type="Proteomes" id="UP000000437">
    <property type="component" value="Chromosome 5"/>
</dbReference>
<dbReference type="GO" id="GO:0005783">
    <property type="term" value="C:endoplasmic reticulum"/>
    <property type="evidence" value="ECO:0000250"/>
    <property type="project" value="UniProtKB"/>
</dbReference>
<dbReference type="GO" id="GO:0005789">
    <property type="term" value="C:endoplasmic reticulum membrane"/>
    <property type="evidence" value="ECO:0000250"/>
    <property type="project" value="UniProtKB"/>
</dbReference>
<dbReference type="GO" id="GO:0044389">
    <property type="term" value="F:ubiquitin-like protein ligase binding"/>
    <property type="evidence" value="ECO:0000318"/>
    <property type="project" value="GO_Central"/>
</dbReference>
<dbReference type="GO" id="GO:0141185">
    <property type="term" value="F:UFM1-modified protein reader activity"/>
    <property type="evidence" value="ECO:0000250"/>
    <property type="project" value="UniProtKB"/>
</dbReference>
<dbReference type="GO" id="GO:0051216">
    <property type="term" value="P:cartilage development"/>
    <property type="evidence" value="ECO:0000315"/>
    <property type="project" value="ZFIN"/>
</dbReference>
<dbReference type="GO" id="GO:1903895">
    <property type="term" value="P:negative regulation of IRE1-mediated unfolded protein response"/>
    <property type="evidence" value="ECO:0000250"/>
    <property type="project" value="UniProtKB"/>
</dbReference>
<dbReference type="GO" id="GO:0140501">
    <property type="term" value="P:positive regulation of reticulophagy"/>
    <property type="evidence" value="ECO:0000250"/>
    <property type="project" value="UniProtKB"/>
</dbReference>
<dbReference type="GO" id="GO:1990592">
    <property type="term" value="P:protein K69-linked ufmylation"/>
    <property type="evidence" value="ECO:0000250"/>
    <property type="project" value="UniProtKB"/>
</dbReference>
<dbReference type="GO" id="GO:0070972">
    <property type="term" value="P:protein localization to endoplasmic reticulum"/>
    <property type="evidence" value="ECO:0000250"/>
    <property type="project" value="UniProtKB"/>
</dbReference>
<dbReference type="GO" id="GO:0071569">
    <property type="term" value="P:protein ufmylation"/>
    <property type="evidence" value="ECO:0000250"/>
    <property type="project" value="UniProtKB"/>
</dbReference>
<dbReference type="GO" id="GO:0031647">
    <property type="term" value="P:regulation of protein stability"/>
    <property type="evidence" value="ECO:0000250"/>
    <property type="project" value="UniProtKB"/>
</dbReference>
<dbReference type="GO" id="GO:0072344">
    <property type="term" value="P:rescue of stalled ribosome"/>
    <property type="evidence" value="ECO:0000250"/>
    <property type="project" value="UniProtKB"/>
</dbReference>
<dbReference type="GO" id="GO:0034976">
    <property type="term" value="P:response to endoplasmic reticulum stress"/>
    <property type="evidence" value="ECO:0000250"/>
    <property type="project" value="UniProtKB"/>
</dbReference>
<dbReference type="GO" id="GO:0061709">
    <property type="term" value="P:reticulophagy"/>
    <property type="evidence" value="ECO:0000250"/>
    <property type="project" value="UniProtKB"/>
</dbReference>
<dbReference type="GO" id="GO:0032790">
    <property type="term" value="P:ribosome disassembly"/>
    <property type="evidence" value="ECO:0000250"/>
    <property type="project" value="UniProtKB"/>
</dbReference>
<dbReference type="FunFam" id="1.10.10.10:FF:000143">
    <property type="entry name" value="DDRGK domain-containing protein 1"/>
    <property type="match status" value="1"/>
</dbReference>
<dbReference type="Gene3D" id="1.10.10.10">
    <property type="entry name" value="Winged helix-like DNA-binding domain superfamily/Winged helix DNA-binding domain"/>
    <property type="match status" value="1"/>
</dbReference>
<dbReference type="InterPro" id="IPR019153">
    <property type="entry name" value="DDRGK_dom-contain"/>
</dbReference>
<dbReference type="InterPro" id="IPR050899">
    <property type="entry name" value="DDRGK_domain-containing"/>
</dbReference>
<dbReference type="InterPro" id="IPR036388">
    <property type="entry name" value="WH-like_DNA-bd_sf"/>
</dbReference>
<dbReference type="InterPro" id="IPR036390">
    <property type="entry name" value="WH_DNA-bd_sf"/>
</dbReference>
<dbReference type="PANTHER" id="PTHR48176">
    <property type="entry name" value="DDRGK DOMAIN-CONTAINING PROTEIN 1"/>
    <property type="match status" value="1"/>
</dbReference>
<dbReference type="PANTHER" id="PTHR48176:SF1">
    <property type="entry name" value="DDRGK DOMAIN-CONTAINING PROTEIN 1"/>
    <property type="match status" value="1"/>
</dbReference>
<dbReference type="Pfam" id="PF09756">
    <property type="entry name" value="DDRGK"/>
    <property type="match status" value="1"/>
</dbReference>
<dbReference type="SMART" id="SM01128">
    <property type="entry name" value="DDRGK"/>
    <property type="match status" value="1"/>
</dbReference>
<dbReference type="SUPFAM" id="SSF46785">
    <property type="entry name" value="Winged helix' DNA-binding domain"/>
    <property type="match status" value="1"/>
</dbReference>
<accession>Q6P0E5</accession>
<sequence>MDVVLYIAAAAILLVLIVFSVKIRGRTQDADVEDHQNVTARVSARPQAAPERAAGMPRRRRGLHSRVNAQRAQRASDNEDSPVEADEDEEGRNASEERPQAAGKVGAKKQRKLEEKQARKAQREAEQEEREERKRLQELRDQERQKEEEKERQQEQKQEEELQRVKEEQERREEEEYQRLKESFIIEDQGEAEELTEHESQSLLQEFIQYVQKSKVVLLEDLASQFGLRTQDAIARLQDLIADGSLTGVIDDRGKFIFITPEELNAVAQFIKQRGRVSISELAQASNTLINLTPDIHSSA</sequence>
<comment type="function">
    <text evidence="1 2 5">Component of the UFM1 ribosome E3 ligase (UREL) complex, a multiprotein complex that catalyzes ufmylation of endoplasmic reticulum-docked proteins (By similarity). The UREL complex plays a key role in ribosome recycling by mediating mono-ufmylation of the RPL26/uL24 subunit of the 60S ribosome following ribosome dissociation: ufmylation weakens the junction between post-termination 60S subunits and SEC61 translocons, promoting release and recycling of the large ribosomal subunit from the endoplasmic reticulum membrane (By similarity). Ufmylation of RPL26/uL24 and subsequent 60S ribosome recycling either take place after normal termination of translation or after ribosome stalling during cotranslational translocation at the endoplasmic reticulum (By similarity). Within the UREL complex, DDRGK1 tethers the complex to the endoplasmic reticulum membrane to restrict its activity to endoplasmic reticulum-docked ribosomes and acts as an ufmylation 'reader': following RPL26/uL24 ufmylation, DDRGK1 specifically binds to ufmylated RPL26/uL24 via its UFIM motif, resulting in stable association between the 60S ribosome and the UREL complex, followed by dissociation of the 60S ribosome subunit from the endoplasmic reticulum membrane (By similarity). The UREL complex is also involved in reticulophagy in response to endoplasmic reticulum stress by promoting ufmylation of proteins such as CYB5R3 and RPN1, thereby promoting lysosomal degradation of ufmylated proteins (By similarity). Plays a role in cartilage development through sox9, inhibiting the ubiquitin-mediated proteasomal degradation of this transcriptional regulator (PubMed:28263186). Required for stabilization and ufmylation of ATG9A (By similarity).</text>
</comment>
<comment type="subunit">
    <text evidence="2">Component of the UFM1 ribosome E3 ligase (UREL) complex, composed of ufl1, ddrgk1 and cdk5rap3.</text>
</comment>
<comment type="subcellular location">
    <subcellularLocation>
        <location evidence="2">Endoplasmic reticulum membrane</location>
        <topology evidence="2">Single-pass membrane protein</topology>
    </subcellularLocation>
</comment>
<comment type="domain">
    <text evidence="2">The UFM1-interacting motif (UFIM) specifically recognizes and binds ufmylated RPL26/uL24, resulting in stable association between the 60S ribosome and the UREL complex.</text>
</comment>
<comment type="disruption phenotype">
    <text evidence="5">Morpholino knockdown alters craniofacial cartilage development.</text>
</comment>
<comment type="similarity">
    <text evidence="8">Belongs to the DDRGK1 family.</text>
</comment>
<keyword id="KW-0256">Endoplasmic reticulum</keyword>
<keyword id="KW-0472">Membrane</keyword>
<keyword id="KW-1185">Reference proteome</keyword>
<keyword id="KW-0812">Transmembrane</keyword>
<keyword id="KW-1133">Transmembrane helix</keyword>
<keyword id="KW-0833">Ubl conjugation pathway</keyword>